<feature type="chain" id="PRO_1000114796" description="Imidazole glycerol phosphate synthase subunit HisH">
    <location>
        <begin position="1"/>
        <end position="213"/>
    </location>
</feature>
<feature type="domain" description="Glutamine amidotransferase type-1" evidence="1">
    <location>
        <begin position="4"/>
        <end position="211"/>
    </location>
</feature>
<feature type="active site" description="Nucleophile" evidence="1">
    <location>
        <position position="82"/>
    </location>
</feature>
<feature type="active site" evidence="1">
    <location>
        <position position="186"/>
    </location>
</feature>
<feature type="active site" evidence="1">
    <location>
        <position position="188"/>
    </location>
</feature>
<keyword id="KW-0028">Amino-acid biosynthesis</keyword>
<keyword id="KW-0963">Cytoplasm</keyword>
<keyword id="KW-0315">Glutamine amidotransferase</keyword>
<keyword id="KW-0368">Histidine biosynthesis</keyword>
<keyword id="KW-0378">Hydrolase</keyword>
<keyword id="KW-0456">Lyase</keyword>
<keyword id="KW-1185">Reference proteome</keyword>
<gene>
    <name evidence="1" type="primary">hisH</name>
    <name type="ordered locus">Syncc9902_0719</name>
</gene>
<comment type="function">
    <text evidence="1">IGPS catalyzes the conversion of PRFAR and glutamine to IGP, AICAR and glutamate. The HisH subunit catalyzes the hydrolysis of glutamine to glutamate and ammonia as part of the synthesis of IGP and AICAR. The resulting ammonia molecule is channeled to the active site of HisF.</text>
</comment>
<comment type="catalytic activity">
    <reaction evidence="1">
        <text>5-[(5-phospho-1-deoxy-D-ribulos-1-ylimino)methylamino]-1-(5-phospho-beta-D-ribosyl)imidazole-4-carboxamide + L-glutamine = D-erythro-1-(imidazol-4-yl)glycerol 3-phosphate + 5-amino-1-(5-phospho-beta-D-ribosyl)imidazole-4-carboxamide + L-glutamate + H(+)</text>
        <dbReference type="Rhea" id="RHEA:24793"/>
        <dbReference type="ChEBI" id="CHEBI:15378"/>
        <dbReference type="ChEBI" id="CHEBI:29985"/>
        <dbReference type="ChEBI" id="CHEBI:58278"/>
        <dbReference type="ChEBI" id="CHEBI:58359"/>
        <dbReference type="ChEBI" id="CHEBI:58475"/>
        <dbReference type="ChEBI" id="CHEBI:58525"/>
        <dbReference type="EC" id="4.3.2.10"/>
    </reaction>
</comment>
<comment type="catalytic activity">
    <reaction evidence="1">
        <text>L-glutamine + H2O = L-glutamate + NH4(+)</text>
        <dbReference type="Rhea" id="RHEA:15889"/>
        <dbReference type="ChEBI" id="CHEBI:15377"/>
        <dbReference type="ChEBI" id="CHEBI:28938"/>
        <dbReference type="ChEBI" id="CHEBI:29985"/>
        <dbReference type="ChEBI" id="CHEBI:58359"/>
        <dbReference type="EC" id="3.5.1.2"/>
    </reaction>
</comment>
<comment type="pathway">
    <text evidence="1">Amino-acid biosynthesis; L-histidine biosynthesis; L-histidine from 5-phospho-alpha-D-ribose 1-diphosphate: step 5/9.</text>
</comment>
<comment type="subunit">
    <text evidence="1">Heterodimer of HisH and HisF.</text>
</comment>
<comment type="subcellular location">
    <subcellularLocation>
        <location evidence="1">Cytoplasm</location>
    </subcellularLocation>
</comment>
<accession>Q3AYZ0</accession>
<proteinExistence type="inferred from homology"/>
<organism>
    <name type="scientific">Synechococcus sp. (strain CC9902)</name>
    <dbReference type="NCBI Taxonomy" id="316279"/>
    <lineage>
        <taxon>Bacteria</taxon>
        <taxon>Bacillati</taxon>
        <taxon>Cyanobacteriota</taxon>
        <taxon>Cyanophyceae</taxon>
        <taxon>Synechococcales</taxon>
        <taxon>Synechococcaceae</taxon>
        <taxon>Synechococcus</taxon>
    </lineage>
</organism>
<name>HIS5_SYNS9</name>
<dbReference type="EC" id="4.3.2.10" evidence="1"/>
<dbReference type="EC" id="3.5.1.2" evidence="1"/>
<dbReference type="EMBL" id="CP000097">
    <property type="protein sequence ID" value="ABB25687.1"/>
    <property type="molecule type" value="Genomic_DNA"/>
</dbReference>
<dbReference type="RefSeq" id="WP_011359528.1">
    <property type="nucleotide sequence ID" value="NC_007513.1"/>
</dbReference>
<dbReference type="SMR" id="Q3AYZ0"/>
<dbReference type="STRING" id="316279.Syncc9902_0719"/>
<dbReference type="KEGG" id="sye:Syncc9902_0719"/>
<dbReference type="eggNOG" id="COG0118">
    <property type="taxonomic scope" value="Bacteria"/>
</dbReference>
<dbReference type="HOGENOM" id="CLU_071837_2_2_3"/>
<dbReference type="OrthoDB" id="9807137at2"/>
<dbReference type="UniPathway" id="UPA00031">
    <property type="reaction ID" value="UER00010"/>
</dbReference>
<dbReference type="Proteomes" id="UP000002712">
    <property type="component" value="Chromosome"/>
</dbReference>
<dbReference type="GO" id="GO:0005737">
    <property type="term" value="C:cytoplasm"/>
    <property type="evidence" value="ECO:0007669"/>
    <property type="project" value="UniProtKB-SubCell"/>
</dbReference>
<dbReference type="GO" id="GO:0004359">
    <property type="term" value="F:glutaminase activity"/>
    <property type="evidence" value="ECO:0007669"/>
    <property type="project" value="UniProtKB-EC"/>
</dbReference>
<dbReference type="GO" id="GO:0000107">
    <property type="term" value="F:imidazoleglycerol-phosphate synthase activity"/>
    <property type="evidence" value="ECO:0007669"/>
    <property type="project" value="UniProtKB-UniRule"/>
</dbReference>
<dbReference type="GO" id="GO:0016829">
    <property type="term" value="F:lyase activity"/>
    <property type="evidence" value="ECO:0007669"/>
    <property type="project" value="UniProtKB-KW"/>
</dbReference>
<dbReference type="GO" id="GO:0000105">
    <property type="term" value="P:L-histidine biosynthetic process"/>
    <property type="evidence" value="ECO:0007669"/>
    <property type="project" value="UniProtKB-UniRule"/>
</dbReference>
<dbReference type="CDD" id="cd01748">
    <property type="entry name" value="GATase1_IGP_Synthase"/>
    <property type="match status" value="1"/>
</dbReference>
<dbReference type="Gene3D" id="3.40.50.880">
    <property type="match status" value="1"/>
</dbReference>
<dbReference type="HAMAP" id="MF_00278">
    <property type="entry name" value="HisH"/>
    <property type="match status" value="1"/>
</dbReference>
<dbReference type="InterPro" id="IPR029062">
    <property type="entry name" value="Class_I_gatase-like"/>
</dbReference>
<dbReference type="InterPro" id="IPR017926">
    <property type="entry name" value="GATASE"/>
</dbReference>
<dbReference type="InterPro" id="IPR010139">
    <property type="entry name" value="Imidazole-glycPsynth_HisH"/>
</dbReference>
<dbReference type="NCBIfam" id="TIGR01855">
    <property type="entry name" value="IMP_synth_hisH"/>
    <property type="match status" value="1"/>
</dbReference>
<dbReference type="PANTHER" id="PTHR42701">
    <property type="entry name" value="IMIDAZOLE GLYCEROL PHOSPHATE SYNTHASE SUBUNIT HISH"/>
    <property type="match status" value="1"/>
</dbReference>
<dbReference type="PANTHER" id="PTHR42701:SF1">
    <property type="entry name" value="IMIDAZOLE GLYCEROL PHOSPHATE SYNTHASE SUBUNIT HISH"/>
    <property type="match status" value="1"/>
</dbReference>
<dbReference type="Pfam" id="PF00117">
    <property type="entry name" value="GATase"/>
    <property type="match status" value="1"/>
</dbReference>
<dbReference type="PIRSF" id="PIRSF000495">
    <property type="entry name" value="Amidotransf_hisH"/>
    <property type="match status" value="1"/>
</dbReference>
<dbReference type="SUPFAM" id="SSF52317">
    <property type="entry name" value="Class I glutamine amidotransferase-like"/>
    <property type="match status" value="1"/>
</dbReference>
<dbReference type="PROSITE" id="PS51273">
    <property type="entry name" value="GATASE_TYPE_1"/>
    <property type="match status" value="1"/>
</dbReference>
<reference key="1">
    <citation type="submission" date="2005-08" db="EMBL/GenBank/DDBJ databases">
        <title>Complete sequence of Synechococcus sp. CC9902.</title>
        <authorList>
            <person name="Copeland A."/>
            <person name="Lucas S."/>
            <person name="Lapidus A."/>
            <person name="Barry K."/>
            <person name="Detter J.C."/>
            <person name="Glavina T."/>
            <person name="Hammon N."/>
            <person name="Israni S."/>
            <person name="Pitluck S."/>
            <person name="Martinez M."/>
            <person name="Schmutz J."/>
            <person name="Larimer F."/>
            <person name="Land M."/>
            <person name="Kyrpides N."/>
            <person name="Ivanova N."/>
            <person name="Richardson P."/>
        </authorList>
    </citation>
    <scope>NUCLEOTIDE SEQUENCE [LARGE SCALE GENOMIC DNA]</scope>
    <source>
        <strain>CC9902</strain>
    </source>
</reference>
<sequence length="213" mass="23021">MGLNLGVIDYGMGNLHSVGKALERLGEQAVLVQGPEDLKSVDALILPGVGSFDPAIENLRATGLIPHLKDWGNNNRPLLGICLGLQLLFERSDEGSKDGLGLFQGAVERLQSHPNERIPHMGWAPLTVERNCPLLHSDDPTPWVYFVHSYAAVPLNSSVLAATAAYGNAAVTAMVWSGRIGACQFHPEKSSAAGEAMLKRWLHWLHQGAEPVH</sequence>
<evidence type="ECO:0000255" key="1">
    <source>
        <dbReference type="HAMAP-Rule" id="MF_00278"/>
    </source>
</evidence>
<protein>
    <recommendedName>
        <fullName evidence="1">Imidazole glycerol phosphate synthase subunit HisH</fullName>
        <ecNumber evidence="1">4.3.2.10</ecNumber>
    </recommendedName>
    <alternativeName>
        <fullName evidence="1">IGP synthase glutaminase subunit</fullName>
        <ecNumber evidence="1">3.5.1.2</ecNumber>
    </alternativeName>
    <alternativeName>
        <fullName evidence="1">IGP synthase subunit HisH</fullName>
    </alternativeName>
    <alternativeName>
        <fullName evidence="1">ImGP synthase subunit HisH</fullName>
        <shortName evidence="1">IGPS subunit HisH</shortName>
    </alternativeName>
</protein>